<sequence>MASSNLIKQLQERGLVAQVTDEEALAERLAQGPIALYCGFDPTADSLHLGHLVPLLCLKRFQQAGHKPVALVGGATGLIGDPSFKAAERKLNTEETVQEWVDKIRKQVAPFLDFDCGENSAIAANNYDWFGNMNVLTFLRDIGKHFSVNQMINKEAVKQRLNREDQGISFTEFSYNLLQGYDFACLNKQYGVVLQIGGSDQWGNITSGIDLTRRLHQNQVFGLTVPLITKADGTKFGKTEGGAVWLDPKKTSPYKFYQFWINTADADVYRFLKFFTFMSIEEINALEEEDKNSGKAPRAQYVLAEQVTRLVHGEDGLQAAKRITECLFSGSLSALSEADFEQLAQDGVPMVEMEKGADLMQALVDSELQPSRGQARKTIASNAITINGEKQSDPEYFFKEEDRLFGRFTLLRRGKKNYCLICWK</sequence>
<reference key="1">
    <citation type="journal article" date="2009" name="PLoS Genet.">
        <title>Organised genome dynamics in the Escherichia coli species results in highly diverse adaptive paths.</title>
        <authorList>
            <person name="Touchon M."/>
            <person name="Hoede C."/>
            <person name="Tenaillon O."/>
            <person name="Barbe V."/>
            <person name="Baeriswyl S."/>
            <person name="Bidet P."/>
            <person name="Bingen E."/>
            <person name="Bonacorsi S."/>
            <person name="Bouchier C."/>
            <person name="Bouvet O."/>
            <person name="Calteau A."/>
            <person name="Chiapello H."/>
            <person name="Clermont O."/>
            <person name="Cruveiller S."/>
            <person name="Danchin A."/>
            <person name="Diard M."/>
            <person name="Dossat C."/>
            <person name="Karoui M.E."/>
            <person name="Frapy E."/>
            <person name="Garry L."/>
            <person name="Ghigo J.M."/>
            <person name="Gilles A.M."/>
            <person name="Johnson J."/>
            <person name="Le Bouguenec C."/>
            <person name="Lescat M."/>
            <person name="Mangenot S."/>
            <person name="Martinez-Jehanne V."/>
            <person name="Matic I."/>
            <person name="Nassif X."/>
            <person name="Oztas S."/>
            <person name="Petit M.A."/>
            <person name="Pichon C."/>
            <person name="Rouy Z."/>
            <person name="Ruf C.S."/>
            <person name="Schneider D."/>
            <person name="Tourret J."/>
            <person name="Vacherie B."/>
            <person name="Vallenet D."/>
            <person name="Medigue C."/>
            <person name="Rocha E.P.C."/>
            <person name="Denamur E."/>
        </authorList>
    </citation>
    <scope>NUCLEOTIDE SEQUENCE [LARGE SCALE GENOMIC DNA]</scope>
    <source>
        <strain>55989 / EAEC</strain>
    </source>
</reference>
<comment type="function">
    <text evidence="1">Catalyzes the attachment of tyrosine to tRNA(Tyr) in a two-step reaction: tyrosine is first activated by ATP to form Tyr-AMP and then transferred to the acceptor end of tRNA(Tyr).</text>
</comment>
<comment type="catalytic activity">
    <reaction evidence="1">
        <text>tRNA(Tyr) + L-tyrosine + ATP = L-tyrosyl-tRNA(Tyr) + AMP + diphosphate + H(+)</text>
        <dbReference type="Rhea" id="RHEA:10220"/>
        <dbReference type="Rhea" id="RHEA-COMP:9706"/>
        <dbReference type="Rhea" id="RHEA-COMP:9707"/>
        <dbReference type="ChEBI" id="CHEBI:15378"/>
        <dbReference type="ChEBI" id="CHEBI:30616"/>
        <dbReference type="ChEBI" id="CHEBI:33019"/>
        <dbReference type="ChEBI" id="CHEBI:58315"/>
        <dbReference type="ChEBI" id="CHEBI:78442"/>
        <dbReference type="ChEBI" id="CHEBI:78536"/>
        <dbReference type="ChEBI" id="CHEBI:456215"/>
        <dbReference type="EC" id="6.1.1.1"/>
    </reaction>
</comment>
<comment type="subunit">
    <text evidence="1">Homodimer.</text>
</comment>
<comment type="subcellular location">
    <subcellularLocation>
        <location evidence="1">Cytoplasm</location>
    </subcellularLocation>
</comment>
<comment type="similarity">
    <text evidence="1">Belongs to the class-I aminoacyl-tRNA synthetase family. TyrS type 1 subfamily.</text>
</comment>
<gene>
    <name evidence="1" type="primary">tyrS</name>
    <name type="ordered locus">EC55989_1805</name>
</gene>
<dbReference type="EC" id="6.1.1.1" evidence="1"/>
<dbReference type="EMBL" id="CU928145">
    <property type="protein sequence ID" value="CAU97660.1"/>
    <property type="molecule type" value="Genomic_DNA"/>
</dbReference>
<dbReference type="RefSeq" id="WP_001339629.1">
    <property type="nucleotide sequence ID" value="NC_011748.1"/>
</dbReference>
<dbReference type="SMR" id="B7L5J0"/>
<dbReference type="KEGG" id="eck:EC55989_1805"/>
<dbReference type="HOGENOM" id="CLU_024003_0_3_6"/>
<dbReference type="Proteomes" id="UP000000746">
    <property type="component" value="Chromosome"/>
</dbReference>
<dbReference type="GO" id="GO:0005829">
    <property type="term" value="C:cytosol"/>
    <property type="evidence" value="ECO:0007669"/>
    <property type="project" value="TreeGrafter"/>
</dbReference>
<dbReference type="GO" id="GO:0005524">
    <property type="term" value="F:ATP binding"/>
    <property type="evidence" value="ECO:0007669"/>
    <property type="project" value="UniProtKB-UniRule"/>
</dbReference>
<dbReference type="GO" id="GO:0003723">
    <property type="term" value="F:RNA binding"/>
    <property type="evidence" value="ECO:0007669"/>
    <property type="project" value="UniProtKB-KW"/>
</dbReference>
<dbReference type="GO" id="GO:0004831">
    <property type="term" value="F:tyrosine-tRNA ligase activity"/>
    <property type="evidence" value="ECO:0007669"/>
    <property type="project" value="UniProtKB-UniRule"/>
</dbReference>
<dbReference type="GO" id="GO:0006437">
    <property type="term" value="P:tyrosyl-tRNA aminoacylation"/>
    <property type="evidence" value="ECO:0007669"/>
    <property type="project" value="UniProtKB-UniRule"/>
</dbReference>
<dbReference type="CDD" id="cd00165">
    <property type="entry name" value="S4"/>
    <property type="match status" value="1"/>
</dbReference>
<dbReference type="CDD" id="cd00805">
    <property type="entry name" value="TyrRS_core"/>
    <property type="match status" value="1"/>
</dbReference>
<dbReference type="FunFam" id="1.10.240.10:FF:000001">
    <property type="entry name" value="Tyrosine--tRNA ligase"/>
    <property type="match status" value="1"/>
</dbReference>
<dbReference type="FunFam" id="3.10.290.10:FF:000007">
    <property type="entry name" value="Tyrosine--tRNA ligase"/>
    <property type="match status" value="1"/>
</dbReference>
<dbReference type="FunFam" id="3.40.50.620:FF:000008">
    <property type="entry name" value="Tyrosine--tRNA ligase"/>
    <property type="match status" value="1"/>
</dbReference>
<dbReference type="Gene3D" id="3.40.50.620">
    <property type="entry name" value="HUPs"/>
    <property type="match status" value="1"/>
</dbReference>
<dbReference type="Gene3D" id="3.10.290.10">
    <property type="entry name" value="RNA-binding S4 domain"/>
    <property type="match status" value="1"/>
</dbReference>
<dbReference type="Gene3D" id="1.10.240.10">
    <property type="entry name" value="Tyrosyl-Transfer RNA Synthetase"/>
    <property type="match status" value="1"/>
</dbReference>
<dbReference type="HAMAP" id="MF_02006">
    <property type="entry name" value="Tyr_tRNA_synth_type1"/>
    <property type="match status" value="1"/>
</dbReference>
<dbReference type="InterPro" id="IPR001412">
    <property type="entry name" value="aa-tRNA-synth_I_CS"/>
</dbReference>
<dbReference type="InterPro" id="IPR002305">
    <property type="entry name" value="aa-tRNA-synth_Ic"/>
</dbReference>
<dbReference type="InterPro" id="IPR014729">
    <property type="entry name" value="Rossmann-like_a/b/a_fold"/>
</dbReference>
<dbReference type="InterPro" id="IPR002942">
    <property type="entry name" value="S4_RNA-bd"/>
</dbReference>
<dbReference type="InterPro" id="IPR036986">
    <property type="entry name" value="S4_RNA-bd_sf"/>
</dbReference>
<dbReference type="InterPro" id="IPR054608">
    <property type="entry name" value="SYY-like_C"/>
</dbReference>
<dbReference type="InterPro" id="IPR002307">
    <property type="entry name" value="Tyr-tRNA-ligase"/>
</dbReference>
<dbReference type="InterPro" id="IPR024088">
    <property type="entry name" value="Tyr-tRNA-ligase_bac-type"/>
</dbReference>
<dbReference type="InterPro" id="IPR024107">
    <property type="entry name" value="Tyr-tRNA-ligase_bac_1"/>
</dbReference>
<dbReference type="NCBIfam" id="TIGR00234">
    <property type="entry name" value="tyrS"/>
    <property type="match status" value="1"/>
</dbReference>
<dbReference type="PANTHER" id="PTHR11766:SF0">
    <property type="entry name" value="TYROSINE--TRNA LIGASE, MITOCHONDRIAL"/>
    <property type="match status" value="1"/>
</dbReference>
<dbReference type="PANTHER" id="PTHR11766">
    <property type="entry name" value="TYROSYL-TRNA SYNTHETASE"/>
    <property type="match status" value="1"/>
</dbReference>
<dbReference type="Pfam" id="PF22421">
    <property type="entry name" value="SYY_C-terminal"/>
    <property type="match status" value="1"/>
</dbReference>
<dbReference type="Pfam" id="PF00579">
    <property type="entry name" value="tRNA-synt_1b"/>
    <property type="match status" value="1"/>
</dbReference>
<dbReference type="PRINTS" id="PR01040">
    <property type="entry name" value="TRNASYNTHTYR"/>
</dbReference>
<dbReference type="SMART" id="SM00363">
    <property type="entry name" value="S4"/>
    <property type="match status" value="1"/>
</dbReference>
<dbReference type="SUPFAM" id="SSF55174">
    <property type="entry name" value="Alpha-L RNA-binding motif"/>
    <property type="match status" value="1"/>
</dbReference>
<dbReference type="SUPFAM" id="SSF52374">
    <property type="entry name" value="Nucleotidylyl transferase"/>
    <property type="match status" value="1"/>
</dbReference>
<dbReference type="PROSITE" id="PS00178">
    <property type="entry name" value="AA_TRNA_LIGASE_I"/>
    <property type="match status" value="1"/>
</dbReference>
<dbReference type="PROSITE" id="PS50889">
    <property type="entry name" value="S4"/>
    <property type="match status" value="1"/>
</dbReference>
<protein>
    <recommendedName>
        <fullName evidence="1">Tyrosine--tRNA ligase</fullName>
        <ecNumber evidence="1">6.1.1.1</ecNumber>
    </recommendedName>
    <alternativeName>
        <fullName evidence="1">Tyrosyl-tRNA synthetase</fullName>
        <shortName evidence="1">TyrRS</shortName>
    </alternativeName>
</protein>
<evidence type="ECO:0000255" key="1">
    <source>
        <dbReference type="HAMAP-Rule" id="MF_02006"/>
    </source>
</evidence>
<feature type="chain" id="PRO_1000189289" description="Tyrosine--tRNA ligase">
    <location>
        <begin position="1"/>
        <end position="424"/>
    </location>
</feature>
<feature type="domain" description="S4 RNA-binding" evidence="1">
    <location>
        <begin position="357"/>
        <end position="414"/>
    </location>
</feature>
<feature type="short sequence motif" description="'HIGH' region">
    <location>
        <begin position="42"/>
        <end position="51"/>
    </location>
</feature>
<feature type="short sequence motif" description="'KMSKS' region">
    <location>
        <begin position="235"/>
        <end position="239"/>
    </location>
</feature>
<feature type="binding site" evidence="1">
    <location>
        <position position="37"/>
    </location>
    <ligand>
        <name>L-tyrosine</name>
        <dbReference type="ChEBI" id="CHEBI:58315"/>
    </ligand>
</feature>
<feature type="binding site" evidence="1">
    <location>
        <position position="175"/>
    </location>
    <ligand>
        <name>L-tyrosine</name>
        <dbReference type="ChEBI" id="CHEBI:58315"/>
    </ligand>
</feature>
<feature type="binding site" evidence="1">
    <location>
        <position position="179"/>
    </location>
    <ligand>
        <name>L-tyrosine</name>
        <dbReference type="ChEBI" id="CHEBI:58315"/>
    </ligand>
</feature>
<feature type="binding site" evidence="1">
    <location>
        <position position="238"/>
    </location>
    <ligand>
        <name>ATP</name>
        <dbReference type="ChEBI" id="CHEBI:30616"/>
    </ligand>
</feature>
<feature type="modified residue" description="N6-acetyllysine" evidence="1">
    <location>
        <position position="144"/>
    </location>
</feature>
<keyword id="KW-0007">Acetylation</keyword>
<keyword id="KW-0030">Aminoacyl-tRNA synthetase</keyword>
<keyword id="KW-0067">ATP-binding</keyword>
<keyword id="KW-0963">Cytoplasm</keyword>
<keyword id="KW-0436">Ligase</keyword>
<keyword id="KW-0547">Nucleotide-binding</keyword>
<keyword id="KW-0648">Protein biosynthesis</keyword>
<keyword id="KW-1185">Reference proteome</keyword>
<keyword id="KW-0694">RNA-binding</keyword>
<proteinExistence type="inferred from homology"/>
<accession>B7L5J0</accession>
<name>SYY_ECO55</name>
<organism>
    <name type="scientific">Escherichia coli (strain 55989 / EAEC)</name>
    <dbReference type="NCBI Taxonomy" id="585055"/>
    <lineage>
        <taxon>Bacteria</taxon>
        <taxon>Pseudomonadati</taxon>
        <taxon>Pseudomonadota</taxon>
        <taxon>Gammaproteobacteria</taxon>
        <taxon>Enterobacterales</taxon>
        <taxon>Enterobacteriaceae</taxon>
        <taxon>Escherichia</taxon>
    </lineage>
</organism>